<gene>
    <name type="primary">US6</name>
</gene>
<keyword id="KW-1015">Disulfide bond</keyword>
<keyword id="KW-0244">Early protein</keyword>
<keyword id="KW-0325">Glycoprotein</keyword>
<keyword id="KW-1038">Host endoplasmic reticulum</keyword>
<keyword id="KW-1043">Host membrane</keyword>
<keyword id="KW-0945">Host-virus interaction</keyword>
<keyword id="KW-0393">Immunoglobulin domain</keyword>
<keyword id="KW-1080">Inhibition of host adaptive immune response by virus</keyword>
<keyword id="KW-1107">Inhibition of host TAP by virus</keyword>
<keyword id="KW-0472">Membrane</keyword>
<keyword id="KW-1185">Reference proteome</keyword>
<keyword id="KW-0732">Signal</keyword>
<keyword id="KW-0812">Transmembrane</keyword>
<keyword id="KW-1133">Transmembrane helix</keyword>
<keyword id="KW-0899">Viral immunoevasion</keyword>
<organismHost>
    <name type="scientific">Homo sapiens</name>
    <name type="common">Human</name>
    <dbReference type="NCBI Taxonomy" id="9606"/>
</organismHost>
<comment type="function">
    <text evidence="1">Inhibits peptide loading of MHC class I molecules by transporters associated with antigen processing (TAP). Does not prevent peptide binding to TAP, but binds to the lumenal side of the TAP complex and inhibits peptide translocation by specifically blocking ATP-binding to TAP1, but not TAP2. Also prevents the conformational rearrangement of TAP induced by peptide binding. In consequence, infected cells are masked for immune recognition by cytotoxic T-lymphocytes (By similarity).</text>
</comment>
<comment type="subunit">
    <text evidence="1">Interacts with UL18.</text>
</comment>
<comment type="subcellular location">
    <subcellularLocation>
        <location>Host endoplasmic reticulum membrane</location>
        <topology>Single-pass type I membrane protein</topology>
    </subcellularLocation>
</comment>
<comment type="developmental stage">
    <text>Expressed at early period of virus infection.</text>
</comment>
<comment type="domain">
    <text evidence="1">The ER-lumenal domain is responsible for TAP inhibition. It is sufficient to inhibit ATP binding to TAP (By similarity).</text>
</comment>
<comment type="similarity">
    <text evidence="3">Belongs to the cytomegalovirus US6 family.</text>
</comment>
<dbReference type="EMBL" id="AY446894">
    <property type="protein sequence ID" value="AAR31695.1"/>
    <property type="molecule type" value="Genomic_DNA"/>
</dbReference>
<dbReference type="RefSeq" id="YP_081591.1">
    <property type="nucleotide sequence ID" value="NC_006273.2"/>
</dbReference>
<dbReference type="SMR" id="Q6SW00"/>
<dbReference type="GlyCosmos" id="Q6SW00">
    <property type="glycosylation" value="1 site, No reported glycans"/>
</dbReference>
<dbReference type="DNASU" id="3077555"/>
<dbReference type="GeneID" id="3077555"/>
<dbReference type="KEGG" id="vg:3077555"/>
<dbReference type="Proteomes" id="UP000000938">
    <property type="component" value="Segment"/>
</dbReference>
<dbReference type="GO" id="GO:0044167">
    <property type="term" value="C:host cell endoplasmic reticulum membrane"/>
    <property type="evidence" value="ECO:0007669"/>
    <property type="project" value="UniProtKB-SubCell"/>
</dbReference>
<dbReference type="GO" id="GO:0016020">
    <property type="term" value="C:membrane"/>
    <property type="evidence" value="ECO:0007669"/>
    <property type="project" value="UniProtKB-KW"/>
</dbReference>
<dbReference type="GO" id="GO:0039588">
    <property type="term" value="P:symbiont-mediated suppression of host antigen processing and presentation"/>
    <property type="evidence" value="ECO:0007669"/>
    <property type="project" value="UniProtKB-KW"/>
</dbReference>
<dbReference type="InterPro" id="IPR035129">
    <property type="entry name" value="US6"/>
</dbReference>
<dbReference type="Pfam" id="PF17616">
    <property type="entry name" value="US6"/>
    <property type="match status" value="1"/>
</dbReference>
<organism>
    <name type="scientific">Human cytomegalovirus (strain Merlin)</name>
    <name type="common">HHV-5</name>
    <name type="synonym">Human herpesvirus 5</name>
    <dbReference type="NCBI Taxonomy" id="295027"/>
    <lineage>
        <taxon>Viruses</taxon>
        <taxon>Duplodnaviria</taxon>
        <taxon>Heunggongvirae</taxon>
        <taxon>Peploviricota</taxon>
        <taxon>Herviviricetes</taxon>
        <taxon>Herpesvirales</taxon>
        <taxon>Orthoherpesviridae</taxon>
        <taxon>Betaherpesvirinae</taxon>
        <taxon>Cytomegalovirus</taxon>
        <taxon>Cytomegalovirus humanbeta5</taxon>
        <taxon>Human cytomegalovirus</taxon>
    </lineage>
</organism>
<accession>Q6SW00</accession>
<accession>D2K3V1</accession>
<proteinExistence type="evidence at transcript level"/>
<protein>
    <recommendedName>
        <fullName>Unique short US6 glycoprotein</fullName>
    </recommendedName>
</protein>
<name>US06_HCMVM</name>
<reference key="1">
    <citation type="journal article" date="2004" name="J. Gen. Virol.">
        <title>Genetic content of wild-type human cytomegalovirus.</title>
        <authorList>
            <person name="Dolan A."/>
            <person name="Cunningham C."/>
            <person name="Hector R.D."/>
            <person name="Hassan-Walker A.F."/>
            <person name="Lee L."/>
            <person name="Addison C."/>
            <person name="Dargan D.J."/>
            <person name="McGeoch D.J."/>
            <person name="Gatherer D."/>
            <person name="Emery V.C."/>
            <person name="Griffiths P.D."/>
            <person name="Sinzger C."/>
            <person name="McSharry B.P."/>
            <person name="Wilkinson G.W.G."/>
            <person name="Davison A.J."/>
        </authorList>
    </citation>
    <scope>NUCLEOTIDE SEQUENCE [LARGE SCALE GENOMIC DNA]</scope>
</reference>
<sequence length="182" mass="20511">MDLLIRLGFLLMCALPTPGERSSRDPKTLLSLSPRQACVPRTKSHRPVCYNDTGDCTDADDSWKQLGEDFAHQCLQAAKKRPKTHKSRPNDRNLEGRLTCQRVRRLLPCDLDIHPSHRLLTLMNNCVCDGAVWNAFRLIERHGFFAVTLYLCCGITLLVVILALLCSITYESTGRGIRRCGS</sequence>
<feature type="signal peptide" evidence="2">
    <location>
        <begin position="1"/>
        <end position="19"/>
    </location>
</feature>
<feature type="chain" id="PRO_0000417852" description="Unique short US6 glycoprotein">
    <location>
        <begin position="20"/>
        <end position="182"/>
    </location>
</feature>
<feature type="topological domain" description="Lumenal" evidence="2">
    <location>
        <begin position="20"/>
        <end position="143"/>
    </location>
</feature>
<feature type="transmembrane region" description="Helical" evidence="2">
    <location>
        <begin position="144"/>
        <end position="164"/>
    </location>
</feature>
<feature type="topological domain" description="Cytoplasmic" evidence="2">
    <location>
        <begin position="165"/>
        <end position="182"/>
    </location>
</feature>
<feature type="domain" description="Ig-like H-type">
    <location>
        <begin position="30"/>
        <end position="130"/>
    </location>
</feature>
<feature type="glycosylation site" description="N-linked (GlcNAc...) asparagine; by host" evidence="2">
    <location>
        <position position="51"/>
    </location>
</feature>
<feature type="disulfide bond" evidence="1">
    <location>
        <begin position="38"/>
        <end position="126"/>
    </location>
</feature>
<evidence type="ECO:0000250" key="1"/>
<evidence type="ECO:0000255" key="2"/>
<evidence type="ECO:0000305" key="3"/>